<accession>O83394</accession>
<evidence type="ECO:0000255" key="1">
    <source>
        <dbReference type="HAMAP-Rule" id="MF_01382"/>
    </source>
</evidence>
<organism>
    <name type="scientific">Treponema pallidum (strain Nichols)</name>
    <dbReference type="NCBI Taxonomy" id="243276"/>
    <lineage>
        <taxon>Bacteria</taxon>
        <taxon>Pseudomonadati</taxon>
        <taxon>Spirochaetota</taxon>
        <taxon>Spirochaetia</taxon>
        <taxon>Spirochaetales</taxon>
        <taxon>Treponemataceae</taxon>
        <taxon>Treponema</taxon>
    </lineage>
</organism>
<sequence length="916" mass="103780">MLVRTALRLIFGSQHERDLKNLLPLLNAVNAQESWVLPLQESEFKQKTAEFKARAAAGEALDAFLPQAFALAREAARRVLGERPYDVQILGSLVLHHGKIVEMKTGEGKTLMSVAAAYLNSLSGRGVHIVTVNDYLAERDARWMRPVYDYLGVSVGVILSSMGSQERRCAYACDITYGTNNELGFDYLRDNMQFLTEEKTQRDFYFAIIDEIDSILIDEARTPLIISGPAENDTQHYAEVDRLVGQLQEVERNPATGDYPNEVDGEEVRGDYIVDEKNRKVSFSGPGMLHIQDVLTHAGLIQGSLFDEENFKYIHYFTQALRAHLLYRADVDYVVKDGQVQIVDEFTGRILEGRRYSDGLHQAIEAKEHIRIAQRNRTMATITFQNFFRMYKKLSGMTGTADTEALELNKIYKLEVVVLPTNLPVARVDEHDVVYLSEEEKWSAICDEIKEAHTRGQPVLVGTISIEKSEKLSALLRTRGVKHEVLNAKNHAREALIIAEAGAKGSVTIATNMAGRGTDIKLGGNPEFRARQSATAIASKHGSSSVTVQEHMQACYEAEYTRWRADYEEVKQLGGLYVIGTERHESRRIDNQLRGRSGRQGDPGRSKFFLSLDDDLMRIFGGERLKRFMSRVGMEPGEPITHSWLNKSIERAQTKVEARNFDVRKHLLEYDDVLNEQRSFIYAQRAQILIDEHVVERVYTTIEEYLNREITALRQELKRRGRLSLGAFQQNLSTLFDYALGGEDASGWNETRLGTLKQEILAHLKKNIESKYLLAGAQNMDTFIRYQYVQAIDKKWLDHLELLEILRESVYLRSYGQKNPLTEYKLEGFDLFYTMLDDIRLSIASQVVRVTVHMEEQRVPRPPHVAQAAHEFQALGQPGRGHGSLSALPIQAGAKVGRNTPCPCGSGKKYKHCCGR</sequence>
<protein>
    <recommendedName>
        <fullName evidence="1">Protein translocase subunit SecA</fullName>
        <ecNumber evidence="1">7.4.2.8</ecNumber>
    </recommendedName>
</protein>
<feature type="chain" id="PRO_0000109619" description="Protein translocase subunit SecA">
    <location>
        <begin position="1"/>
        <end position="916"/>
    </location>
</feature>
<feature type="binding site" evidence="1">
    <location>
        <position position="88"/>
    </location>
    <ligand>
        <name>ATP</name>
        <dbReference type="ChEBI" id="CHEBI:30616"/>
    </ligand>
</feature>
<feature type="binding site" evidence="1">
    <location>
        <begin position="106"/>
        <end position="110"/>
    </location>
    <ligand>
        <name>ATP</name>
        <dbReference type="ChEBI" id="CHEBI:30616"/>
    </ligand>
</feature>
<feature type="binding site" evidence="1">
    <location>
        <position position="519"/>
    </location>
    <ligand>
        <name>ATP</name>
        <dbReference type="ChEBI" id="CHEBI:30616"/>
    </ligand>
</feature>
<feature type="binding site" evidence="1">
    <location>
        <position position="902"/>
    </location>
    <ligand>
        <name>Zn(2+)</name>
        <dbReference type="ChEBI" id="CHEBI:29105"/>
    </ligand>
</feature>
<feature type="binding site" evidence="1">
    <location>
        <position position="904"/>
    </location>
    <ligand>
        <name>Zn(2+)</name>
        <dbReference type="ChEBI" id="CHEBI:29105"/>
    </ligand>
</feature>
<feature type="binding site" evidence="1">
    <location>
        <position position="913"/>
    </location>
    <ligand>
        <name>Zn(2+)</name>
        <dbReference type="ChEBI" id="CHEBI:29105"/>
    </ligand>
</feature>
<feature type="binding site" evidence="1">
    <location>
        <position position="914"/>
    </location>
    <ligand>
        <name>Zn(2+)</name>
        <dbReference type="ChEBI" id="CHEBI:29105"/>
    </ligand>
</feature>
<dbReference type="EC" id="7.4.2.8" evidence="1"/>
<dbReference type="EMBL" id="AE000520">
    <property type="protein sequence ID" value="AAC65365.1"/>
    <property type="molecule type" value="Genomic_DNA"/>
</dbReference>
<dbReference type="PIR" id="E71330">
    <property type="entry name" value="E71330"/>
</dbReference>
<dbReference type="RefSeq" id="WP_010881827.1">
    <property type="nucleotide sequence ID" value="NC_000919.1"/>
</dbReference>
<dbReference type="SMR" id="O83394"/>
<dbReference type="STRING" id="243276.TP_0379"/>
<dbReference type="EnsemblBacteria" id="AAC65365">
    <property type="protein sequence ID" value="AAC65365"/>
    <property type="gene ID" value="TP_0379"/>
</dbReference>
<dbReference type="KEGG" id="tpa:TP_0379"/>
<dbReference type="eggNOG" id="COG0653">
    <property type="taxonomic scope" value="Bacteria"/>
</dbReference>
<dbReference type="HOGENOM" id="CLU_005314_3_0_12"/>
<dbReference type="OrthoDB" id="9805579at2"/>
<dbReference type="Proteomes" id="UP000000811">
    <property type="component" value="Chromosome"/>
</dbReference>
<dbReference type="GO" id="GO:0031522">
    <property type="term" value="C:cell envelope Sec protein transport complex"/>
    <property type="evidence" value="ECO:0007669"/>
    <property type="project" value="TreeGrafter"/>
</dbReference>
<dbReference type="GO" id="GO:0005829">
    <property type="term" value="C:cytosol"/>
    <property type="evidence" value="ECO:0007669"/>
    <property type="project" value="TreeGrafter"/>
</dbReference>
<dbReference type="GO" id="GO:0005886">
    <property type="term" value="C:plasma membrane"/>
    <property type="evidence" value="ECO:0007669"/>
    <property type="project" value="UniProtKB-SubCell"/>
</dbReference>
<dbReference type="GO" id="GO:0005524">
    <property type="term" value="F:ATP binding"/>
    <property type="evidence" value="ECO:0007669"/>
    <property type="project" value="UniProtKB-UniRule"/>
</dbReference>
<dbReference type="GO" id="GO:0046872">
    <property type="term" value="F:metal ion binding"/>
    <property type="evidence" value="ECO:0007669"/>
    <property type="project" value="UniProtKB-KW"/>
</dbReference>
<dbReference type="GO" id="GO:0008564">
    <property type="term" value="F:protein-exporting ATPase activity"/>
    <property type="evidence" value="ECO:0007669"/>
    <property type="project" value="UniProtKB-EC"/>
</dbReference>
<dbReference type="GO" id="GO:0065002">
    <property type="term" value="P:intracellular protein transmembrane transport"/>
    <property type="evidence" value="ECO:0007669"/>
    <property type="project" value="UniProtKB-UniRule"/>
</dbReference>
<dbReference type="GO" id="GO:0017038">
    <property type="term" value="P:protein import"/>
    <property type="evidence" value="ECO:0007669"/>
    <property type="project" value="InterPro"/>
</dbReference>
<dbReference type="GO" id="GO:0006605">
    <property type="term" value="P:protein targeting"/>
    <property type="evidence" value="ECO:0007669"/>
    <property type="project" value="UniProtKB-UniRule"/>
</dbReference>
<dbReference type="GO" id="GO:0043952">
    <property type="term" value="P:protein transport by the Sec complex"/>
    <property type="evidence" value="ECO:0007669"/>
    <property type="project" value="TreeGrafter"/>
</dbReference>
<dbReference type="CDD" id="cd17928">
    <property type="entry name" value="DEXDc_SecA"/>
    <property type="match status" value="1"/>
</dbReference>
<dbReference type="CDD" id="cd18803">
    <property type="entry name" value="SF2_C_secA"/>
    <property type="match status" value="1"/>
</dbReference>
<dbReference type="FunFam" id="3.40.50.300:FF:000113">
    <property type="entry name" value="Preprotein translocase subunit SecA"/>
    <property type="match status" value="1"/>
</dbReference>
<dbReference type="FunFam" id="3.90.1440.10:FF:000001">
    <property type="entry name" value="Preprotein translocase subunit SecA"/>
    <property type="match status" value="1"/>
</dbReference>
<dbReference type="Gene3D" id="1.10.3060.10">
    <property type="entry name" value="Helical scaffold and wing domains of SecA"/>
    <property type="match status" value="1"/>
</dbReference>
<dbReference type="Gene3D" id="3.40.50.300">
    <property type="entry name" value="P-loop containing nucleotide triphosphate hydrolases"/>
    <property type="match status" value="2"/>
</dbReference>
<dbReference type="Gene3D" id="3.90.1440.10">
    <property type="entry name" value="SecA, preprotein cross-linking domain"/>
    <property type="match status" value="1"/>
</dbReference>
<dbReference type="HAMAP" id="MF_01382">
    <property type="entry name" value="SecA"/>
    <property type="match status" value="1"/>
</dbReference>
<dbReference type="InterPro" id="IPR014001">
    <property type="entry name" value="Helicase_ATP-bd"/>
</dbReference>
<dbReference type="InterPro" id="IPR027417">
    <property type="entry name" value="P-loop_NTPase"/>
</dbReference>
<dbReference type="InterPro" id="IPR004027">
    <property type="entry name" value="SEC_C_motif"/>
</dbReference>
<dbReference type="InterPro" id="IPR000185">
    <property type="entry name" value="SecA"/>
</dbReference>
<dbReference type="InterPro" id="IPR020937">
    <property type="entry name" value="SecA_CS"/>
</dbReference>
<dbReference type="InterPro" id="IPR011115">
    <property type="entry name" value="SecA_DEAD"/>
</dbReference>
<dbReference type="InterPro" id="IPR014018">
    <property type="entry name" value="SecA_motor_DEAD"/>
</dbReference>
<dbReference type="InterPro" id="IPR011130">
    <property type="entry name" value="SecA_preprotein_X-link_dom"/>
</dbReference>
<dbReference type="InterPro" id="IPR044722">
    <property type="entry name" value="SecA_SF2_C"/>
</dbReference>
<dbReference type="InterPro" id="IPR011116">
    <property type="entry name" value="SecA_Wing/Scaffold"/>
</dbReference>
<dbReference type="InterPro" id="IPR036266">
    <property type="entry name" value="SecA_Wing/Scaffold_sf"/>
</dbReference>
<dbReference type="InterPro" id="IPR036670">
    <property type="entry name" value="SecA_X-link_sf"/>
</dbReference>
<dbReference type="NCBIfam" id="NF009538">
    <property type="entry name" value="PRK12904.1"/>
    <property type="match status" value="1"/>
</dbReference>
<dbReference type="NCBIfam" id="TIGR00963">
    <property type="entry name" value="secA"/>
    <property type="match status" value="1"/>
</dbReference>
<dbReference type="PANTHER" id="PTHR30612:SF0">
    <property type="entry name" value="CHLOROPLAST PROTEIN-TRANSPORTING ATPASE"/>
    <property type="match status" value="1"/>
</dbReference>
<dbReference type="PANTHER" id="PTHR30612">
    <property type="entry name" value="SECA INNER MEMBRANE COMPONENT OF SEC PROTEIN SECRETION SYSTEM"/>
    <property type="match status" value="1"/>
</dbReference>
<dbReference type="Pfam" id="PF21090">
    <property type="entry name" value="P-loop_SecA"/>
    <property type="match status" value="1"/>
</dbReference>
<dbReference type="Pfam" id="PF02810">
    <property type="entry name" value="SEC-C"/>
    <property type="match status" value="1"/>
</dbReference>
<dbReference type="Pfam" id="PF07517">
    <property type="entry name" value="SecA_DEAD"/>
    <property type="match status" value="1"/>
</dbReference>
<dbReference type="Pfam" id="PF01043">
    <property type="entry name" value="SecA_PP_bind"/>
    <property type="match status" value="1"/>
</dbReference>
<dbReference type="Pfam" id="PF07516">
    <property type="entry name" value="SecA_SW"/>
    <property type="match status" value="1"/>
</dbReference>
<dbReference type="PRINTS" id="PR00906">
    <property type="entry name" value="SECA"/>
</dbReference>
<dbReference type="SMART" id="SM00957">
    <property type="entry name" value="SecA_DEAD"/>
    <property type="match status" value="1"/>
</dbReference>
<dbReference type="SMART" id="SM00958">
    <property type="entry name" value="SecA_PP_bind"/>
    <property type="match status" value="1"/>
</dbReference>
<dbReference type="SUPFAM" id="SSF81886">
    <property type="entry name" value="Helical scaffold and wing domains of SecA"/>
    <property type="match status" value="1"/>
</dbReference>
<dbReference type="SUPFAM" id="SSF52540">
    <property type="entry name" value="P-loop containing nucleoside triphosphate hydrolases"/>
    <property type="match status" value="2"/>
</dbReference>
<dbReference type="SUPFAM" id="SSF81767">
    <property type="entry name" value="Pre-protein crosslinking domain of SecA"/>
    <property type="match status" value="1"/>
</dbReference>
<dbReference type="PROSITE" id="PS01312">
    <property type="entry name" value="SECA"/>
    <property type="match status" value="1"/>
</dbReference>
<dbReference type="PROSITE" id="PS51196">
    <property type="entry name" value="SECA_MOTOR_DEAD"/>
    <property type="match status" value="1"/>
</dbReference>
<reference key="1">
    <citation type="journal article" date="1998" name="Science">
        <title>Complete genome sequence of Treponema pallidum, the syphilis spirochete.</title>
        <authorList>
            <person name="Fraser C.M."/>
            <person name="Norris S.J."/>
            <person name="Weinstock G.M."/>
            <person name="White O."/>
            <person name="Sutton G.G."/>
            <person name="Dodson R.J."/>
            <person name="Gwinn M.L."/>
            <person name="Hickey E.K."/>
            <person name="Clayton R.A."/>
            <person name="Ketchum K.A."/>
            <person name="Sodergren E."/>
            <person name="Hardham J.M."/>
            <person name="McLeod M.P."/>
            <person name="Salzberg S.L."/>
            <person name="Peterson J.D."/>
            <person name="Khalak H.G."/>
            <person name="Richardson D.L."/>
            <person name="Howell J.K."/>
            <person name="Chidambaram M."/>
            <person name="Utterback T.R."/>
            <person name="McDonald L.A."/>
            <person name="Artiach P."/>
            <person name="Bowman C."/>
            <person name="Cotton M.D."/>
            <person name="Fujii C."/>
            <person name="Garland S.A."/>
            <person name="Hatch B."/>
            <person name="Horst K."/>
            <person name="Roberts K.M."/>
            <person name="Sandusky M."/>
            <person name="Weidman J.F."/>
            <person name="Smith H.O."/>
            <person name="Venter J.C."/>
        </authorList>
    </citation>
    <scope>NUCLEOTIDE SEQUENCE [LARGE SCALE GENOMIC DNA]</scope>
    <source>
        <strain>Nichols</strain>
    </source>
</reference>
<gene>
    <name evidence="1" type="primary">secA</name>
    <name type="ordered locus">TP_0379</name>
</gene>
<name>SECA_TREPA</name>
<comment type="function">
    <text evidence="1">Part of the Sec protein translocase complex. Interacts with the SecYEG preprotein conducting channel. Has a central role in coupling the hydrolysis of ATP to the transfer of proteins into and across the cell membrane, serving as an ATP-driven molecular motor driving the stepwise translocation of polypeptide chains across the membrane.</text>
</comment>
<comment type="catalytic activity">
    <reaction evidence="1">
        <text>ATP + H2O + cellular proteinSide 1 = ADP + phosphate + cellular proteinSide 2.</text>
        <dbReference type="EC" id="7.4.2.8"/>
    </reaction>
</comment>
<comment type="cofactor">
    <cofactor evidence="1">
        <name>Zn(2+)</name>
        <dbReference type="ChEBI" id="CHEBI:29105"/>
    </cofactor>
    <text evidence="1">May bind 1 zinc ion per subunit.</text>
</comment>
<comment type="subunit">
    <text evidence="1">Monomer and homodimer. Part of the essential Sec protein translocation apparatus which comprises SecA, SecYEG and auxiliary proteins SecDF. Other proteins may also be involved.</text>
</comment>
<comment type="subcellular location">
    <subcellularLocation>
        <location evidence="1">Cell inner membrane</location>
        <topology evidence="1">Peripheral membrane protein</topology>
        <orientation evidence="1">Cytoplasmic side</orientation>
    </subcellularLocation>
    <subcellularLocation>
        <location evidence="1">Cytoplasm</location>
    </subcellularLocation>
    <text evidence="1">Distribution is 50-50.</text>
</comment>
<comment type="similarity">
    <text evidence="1">Belongs to the SecA family.</text>
</comment>
<proteinExistence type="inferred from homology"/>
<keyword id="KW-0067">ATP-binding</keyword>
<keyword id="KW-0997">Cell inner membrane</keyword>
<keyword id="KW-1003">Cell membrane</keyword>
<keyword id="KW-0963">Cytoplasm</keyword>
<keyword id="KW-0472">Membrane</keyword>
<keyword id="KW-0479">Metal-binding</keyword>
<keyword id="KW-0547">Nucleotide-binding</keyword>
<keyword id="KW-0653">Protein transport</keyword>
<keyword id="KW-1185">Reference proteome</keyword>
<keyword id="KW-1278">Translocase</keyword>
<keyword id="KW-0811">Translocation</keyword>
<keyword id="KW-0813">Transport</keyword>
<keyword id="KW-0862">Zinc</keyword>